<evidence type="ECO:0000255" key="1">
    <source>
        <dbReference type="HAMAP-Rule" id="MF_01394"/>
    </source>
</evidence>
<evidence type="ECO:0000269" key="2">
    <source>
    </source>
</evidence>
<reference key="1">
    <citation type="journal article" date="2003" name="DNA Res.">
        <title>Complete nucleotide sequence of the chloroplast genome from a leptosporangiate fern, Adiantum capillus-veneris L.</title>
        <authorList>
            <person name="Wolf P.G."/>
            <person name="Rowe C.A."/>
            <person name="Sinclair R.B."/>
            <person name="Hasebe M."/>
        </authorList>
    </citation>
    <scope>NUCLEOTIDE SEQUENCE [LARGE SCALE GENOMIC DNA]</scope>
</reference>
<reference key="2">
    <citation type="journal article" date="2004" name="Gene">
        <title>High levels of RNA editing in a vascular plant chloroplast genome: analysis of transcripts from the fern Adiantum capillus-veneris.</title>
        <authorList>
            <person name="Wolf P.G."/>
            <person name="Rowe C.A."/>
            <person name="Hasebe M."/>
        </authorList>
    </citation>
    <scope>NUCLEOTIDE SEQUENCE [GENOMIC DNA]</scope>
    <scope>RNA EDITING</scope>
    <source>
        <tissue>Frond</tissue>
    </source>
</reference>
<comment type="function">
    <text evidence="1">NDH shuttles electrons from NAD(P)H:plastoquinone, via FMN and iron-sulfur (Fe-S) centers, to quinones in the photosynthetic chain and possibly in a chloroplast respiratory chain. The immediate electron acceptor for the enzyme in this species is believed to be plastoquinone. Couples the redox reaction to proton translocation, and thus conserves the redox energy in a proton gradient.</text>
</comment>
<comment type="catalytic activity">
    <reaction evidence="1">
        <text>a plastoquinone + NADH + (n+1) H(+)(in) = a plastoquinol + NAD(+) + n H(+)(out)</text>
        <dbReference type="Rhea" id="RHEA:42608"/>
        <dbReference type="Rhea" id="RHEA-COMP:9561"/>
        <dbReference type="Rhea" id="RHEA-COMP:9562"/>
        <dbReference type="ChEBI" id="CHEBI:15378"/>
        <dbReference type="ChEBI" id="CHEBI:17757"/>
        <dbReference type="ChEBI" id="CHEBI:57540"/>
        <dbReference type="ChEBI" id="CHEBI:57945"/>
        <dbReference type="ChEBI" id="CHEBI:62192"/>
    </reaction>
</comment>
<comment type="catalytic activity">
    <reaction evidence="1">
        <text>a plastoquinone + NADPH + (n+1) H(+)(in) = a plastoquinol + NADP(+) + n H(+)(out)</text>
        <dbReference type="Rhea" id="RHEA:42612"/>
        <dbReference type="Rhea" id="RHEA-COMP:9561"/>
        <dbReference type="Rhea" id="RHEA-COMP:9562"/>
        <dbReference type="ChEBI" id="CHEBI:15378"/>
        <dbReference type="ChEBI" id="CHEBI:17757"/>
        <dbReference type="ChEBI" id="CHEBI:57783"/>
        <dbReference type="ChEBI" id="CHEBI:58349"/>
        <dbReference type="ChEBI" id="CHEBI:62192"/>
    </reaction>
</comment>
<comment type="subunit">
    <text evidence="1">NDH is composed of at least 16 different subunits, 5 of which are encoded in the nucleus.</text>
</comment>
<comment type="subcellular location">
    <subcellularLocation>
        <location evidence="1">Plastid</location>
        <location evidence="1">Chloroplast thylakoid membrane</location>
        <topology evidence="1">Multi-pass membrane protein</topology>
    </subcellularLocation>
</comment>
<comment type="RNA editing">
    <location>
        <position position="11" evidence="2"/>
    </location>
    <location>
        <position position="62" evidence="2"/>
    </location>
    <location>
        <position position="72" evidence="2"/>
    </location>
    <location>
        <position position="97" evidence="2"/>
    </location>
    <location>
        <position position="117" evidence="2"/>
    </location>
</comment>
<comment type="similarity">
    <text evidence="1">Belongs to the complex I subunit 3 family.</text>
</comment>
<feature type="chain" id="PRO_0000117842" description="NAD(P)H-quinone oxidoreductase subunit 3, chloroplastic">
    <location>
        <begin position="1"/>
        <end position="120"/>
    </location>
</feature>
<feature type="transmembrane region" description="Helical" evidence="1">
    <location>
        <begin position="7"/>
        <end position="27"/>
    </location>
</feature>
<feature type="transmembrane region" description="Helical" evidence="1">
    <location>
        <begin position="63"/>
        <end position="83"/>
    </location>
</feature>
<feature type="transmembrane region" description="Helical" evidence="1">
    <location>
        <begin position="89"/>
        <end position="109"/>
    </location>
</feature>
<keyword id="KW-0150">Chloroplast</keyword>
<keyword id="KW-0472">Membrane</keyword>
<keyword id="KW-0520">NAD</keyword>
<keyword id="KW-0521">NADP</keyword>
<keyword id="KW-0934">Plastid</keyword>
<keyword id="KW-0618">Plastoquinone</keyword>
<keyword id="KW-0874">Quinone</keyword>
<keyword id="KW-0691">RNA editing</keyword>
<keyword id="KW-0793">Thylakoid</keyword>
<keyword id="KW-1278">Translocase</keyword>
<keyword id="KW-0812">Transmembrane</keyword>
<keyword id="KW-1133">Transmembrane helix</keyword>
<keyword id="KW-0813">Transport</keyword>
<protein>
    <recommendedName>
        <fullName evidence="1">NAD(P)H-quinone oxidoreductase subunit 3, chloroplastic</fullName>
        <ecNumber evidence="1">7.1.1.-</ecNumber>
    </recommendedName>
    <alternativeName>
        <fullName evidence="1">NAD(P)H dehydrogenase subunit 3</fullName>
    </alternativeName>
    <alternativeName>
        <fullName evidence="1">NADH-plastoquinone oxidoreductase subunit 3</fullName>
    </alternativeName>
</protein>
<gene>
    <name evidence="1" type="primary">ndhC</name>
</gene>
<name>NU3C_ADICA</name>
<dbReference type="EC" id="7.1.1.-" evidence="1"/>
<dbReference type="EMBL" id="AY178864">
    <property type="protein sequence ID" value="AAP29397.2"/>
    <property type="molecule type" value="Genomic_DNA"/>
</dbReference>
<dbReference type="RefSeq" id="NP_848065.2">
    <property type="nucleotide sequence ID" value="NC_004766.1"/>
</dbReference>
<dbReference type="SMR" id="Q85FL5"/>
<dbReference type="GeneID" id="807344"/>
<dbReference type="GO" id="GO:0009535">
    <property type="term" value="C:chloroplast thylakoid membrane"/>
    <property type="evidence" value="ECO:0007669"/>
    <property type="project" value="UniProtKB-SubCell"/>
</dbReference>
<dbReference type="GO" id="GO:0030964">
    <property type="term" value="C:NADH dehydrogenase complex"/>
    <property type="evidence" value="ECO:0007669"/>
    <property type="project" value="TreeGrafter"/>
</dbReference>
<dbReference type="GO" id="GO:0008137">
    <property type="term" value="F:NADH dehydrogenase (ubiquinone) activity"/>
    <property type="evidence" value="ECO:0007669"/>
    <property type="project" value="InterPro"/>
</dbReference>
<dbReference type="GO" id="GO:0048038">
    <property type="term" value="F:quinone binding"/>
    <property type="evidence" value="ECO:0007669"/>
    <property type="project" value="UniProtKB-KW"/>
</dbReference>
<dbReference type="GO" id="GO:0019684">
    <property type="term" value="P:photosynthesis, light reaction"/>
    <property type="evidence" value="ECO:0007669"/>
    <property type="project" value="UniProtKB-UniRule"/>
</dbReference>
<dbReference type="FunFam" id="1.20.58.1610:FF:000001">
    <property type="entry name" value="NAD(P)H-quinone oxidoreductase subunit 3, chloroplastic"/>
    <property type="match status" value="1"/>
</dbReference>
<dbReference type="Gene3D" id="1.20.58.1610">
    <property type="entry name" value="NADH:ubiquinone/plastoquinone oxidoreductase, chain 3"/>
    <property type="match status" value="1"/>
</dbReference>
<dbReference type="HAMAP" id="MF_01394">
    <property type="entry name" value="NDH1_NuoA"/>
    <property type="match status" value="1"/>
</dbReference>
<dbReference type="InterPro" id="IPR023043">
    <property type="entry name" value="NAD(P)H_OxRDtase_bac/plastid"/>
</dbReference>
<dbReference type="InterPro" id="IPR000440">
    <property type="entry name" value="NADH_UbQ/plastoQ_OxRdtase_su3"/>
</dbReference>
<dbReference type="InterPro" id="IPR038430">
    <property type="entry name" value="NDAH_ubi_oxred_su3_sf"/>
</dbReference>
<dbReference type="PANTHER" id="PTHR11058">
    <property type="entry name" value="NADH-UBIQUINONE OXIDOREDUCTASE CHAIN 3"/>
    <property type="match status" value="1"/>
</dbReference>
<dbReference type="PANTHER" id="PTHR11058:SF9">
    <property type="entry name" value="NADH-UBIQUINONE OXIDOREDUCTASE CHAIN 3"/>
    <property type="match status" value="1"/>
</dbReference>
<dbReference type="Pfam" id="PF00507">
    <property type="entry name" value="Oxidored_q4"/>
    <property type="match status" value="1"/>
</dbReference>
<proteinExistence type="evidence at transcript level"/>
<geneLocation type="chloroplast"/>
<accession>Q85FL5</accession>
<sequence length="120" mass="14062">MFLSHQYDSFWIFLLVCISIPLLAFSITRFAAPPREGPEKSTSYESGIEPKGDTWIRFQIRYYMFALVFTVFDVETVFLYPWATSFEELGLFAFVEVIVFIFILIVGLVYAWRKGALEWC</sequence>
<organism>
    <name type="scientific">Adiantum capillus-veneris</name>
    <name type="common">Maidenhair fern</name>
    <dbReference type="NCBI Taxonomy" id="13818"/>
    <lineage>
        <taxon>Eukaryota</taxon>
        <taxon>Viridiplantae</taxon>
        <taxon>Streptophyta</taxon>
        <taxon>Embryophyta</taxon>
        <taxon>Tracheophyta</taxon>
        <taxon>Polypodiopsida</taxon>
        <taxon>Polypodiidae</taxon>
        <taxon>Polypodiales</taxon>
        <taxon>Pteridineae</taxon>
        <taxon>Pteridaceae</taxon>
        <taxon>Vittarioideae</taxon>
        <taxon>Adiantum</taxon>
    </lineage>
</organism>